<keyword id="KW-1185">Reference proteome</keyword>
<keyword id="KW-0687">Ribonucleoprotein</keyword>
<keyword id="KW-0689">Ribosomal protein</keyword>
<keyword id="KW-0694">RNA-binding</keyword>
<keyword id="KW-0699">rRNA-binding</keyword>
<feature type="chain" id="PRO_0000255678" description="Small ribosomal subunit protein uS17">
    <location>
        <begin position="1"/>
        <end position="83"/>
    </location>
</feature>
<reference key="1">
    <citation type="submission" date="2006-03" db="EMBL/GenBank/DDBJ databases">
        <title>Complete genome sequence of Francisella tularensis LVS (Live Vaccine Strain).</title>
        <authorList>
            <person name="Chain P."/>
            <person name="Larimer F."/>
            <person name="Land M."/>
            <person name="Stilwagen S."/>
            <person name="Larsson P."/>
            <person name="Bearden S."/>
            <person name="Chu M."/>
            <person name="Oyston P."/>
            <person name="Forsman M."/>
            <person name="Andersson S."/>
            <person name="Lindler L."/>
            <person name="Titball R."/>
            <person name="Garcia E."/>
        </authorList>
    </citation>
    <scope>NUCLEOTIDE SEQUENCE [LARGE SCALE GENOMIC DNA]</scope>
    <source>
        <strain>LVS</strain>
    </source>
</reference>
<comment type="function">
    <text evidence="1">One of the primary rRNA binding proteins, it binds specifically to the 5'-end of 16S ribosomal RNA.</text>
</comment>
<comment type="subunit">
    <text evidence="1">Part of the 30S ribosomal subunit.</text>
</comment>
<comment type="similarity">
    <text evidence="1">Belongs to the universal ribosomal protein uS17 family.</text>
</comment>
<protein>
    <recommendedName>
        <fullName evidence="1">Small ribosomal subunit protein uS17</fullName>
    </recommendedName>
    <alternativeName>
        <fullName evidence="2">30S ribosomal protein S17</fullName>
    </alternativeName>
</protein>
<sequence length="83" mass="9851">MSDKTRLLEGKVSSVAMDKTVVVRAERYVKHPLYGKFVKKTTKYYVHDENNECKEGDVIKFKETRPYSKTKKWCLVDIIHREK</sequence>
<organism>
    <name type="scientific">Francisella tularensis subsp. holarctica (strain LVS)</name>
    <dbReference type="NCBI Taxonomy" id="376619"/>
    <lineage>
        <taxon>Bacteria</taxon>
        <taxon>Pseudomonadati</taxon>
        <taxon>Pseudomonadota</taxon>
        <taxon>Gammaproteobacteria</taxon>
        <taxon>Thiotrichales</taxon>
        <taxon>Francisellaceae</taxon>
        <taxon>Francisella</taxon>
    </lineage>
</organism>
<evidence type="ECO:0000255" key="1">
    <source>
        <dbReference type="HAMAP-Rule" id="MF_01345"/>
    </source>
</evidence>
<evidence type="ECO:0000305" key="2"/>
<dbReference type="EMBL" id="AM233362">
    <property type="protein sequence ID" value="CAJ78686.1"/>
    <property type="molecule type" value="Genomic_DNA"/>
</dbReference>
<dbReference type="RefSeq" id="WP_010030776.1">
    <property type="nucleotide sequence ID" value="NZ_CP009694.1"/>
</dbReference>
<dbReference type="SMR" id="Q2A5G1"/>
<dbReference type="KEGG" id="ftl:FTL_0245"/>
<dbReference type="Proteomes" id="UP000001944">
    <property type="component" value="Chromosome"/>
</dbReference>
<dbReference type="GO" id="GO:0022627">
    <property type="term" value="C:cytosolic small ribosomal subunit"/>
    <property type="evidence" value="ECO:0007669"/>
    <property type="project" value="TreeGrafter"/>
</dbReference>
<dbReference type="GO" id="GO:0019843">
    <property type="term" value="F:rRNA binding"/>
    <property type="evidence" value="ECO:0007669"/>
    <property type="project" value="UniProtKB-UniRule"/>
</dbReference>
<dbReference type="GO" id="GO:0003735">
    <property type="term" value="F:structural constituent of ribosome"/>
    <property type="evidence" value="ECO:0007669"/>
    <property type="project" value="InterPro"/>
</dbReference>
<dbReference type="GO" id="GO:0006412">
    <property type="term" value="P:translation"/>
    <property type="evidence" value="ECO:0007669"/>
    <property type="project" value="UniProtKB-UniRule"/>
</dbReference>
<dbReference type="CDD" id="cd00364">
    <property type="entry name" value="Ribosomal_uS17"/>
    <property type="match status" value="1"/>
</dbReference>
<dbReference type="Gene3D" id="2.40.50.140">
    <property type="entry name" value="Nucleic acid-binding proteins"/>
    <property type="match status" value="1"/>
</dbReference>
<dbReference type="HAMAP" id="MF_01345_B">
    <property type="entry name" value="Ribosomal_uS17_B"/>
    <property type="match status" value="1"/>
</dbReference>
<dbReference type="InterPro" id="IPR012340">
    <property type="entry name" value="NA-bd_OB-fold"/>
</dbReference>
<dbReference type="InterPro" id="IPR000266">
    <property type="entry name" value="Ribosomal_uS17"/>
</dbReference>
<dbReference type="InterPro" id="IPR019984">
    <property type="entry name" value="Ribosomal_uS17_bact/chlr"/>
</dbReference>
<dbReference type="NCBIfam" id="NF004123">
    <property type="entry name" value="PRK05610.1"/>
    <property type="match status" value="1"/>
</dbReference>
<dbReference type="NCBIfam" id="TIGR03635">
    <property type="entry name" value="uS17_bact"/>
    <property type="match status" value="1"/>
</dbReference>
<dbReference type="PANTHER" id="PTHR10744">
    <property type="entry name" value="40S RIBOSOMAL PROTEIN S11 FAMILY MEMBER"/>
    <property type="match status" value="1"/>
</dbReference>
<dbReference type="PANTHER" id="PTHR10744:SF1">
    <property type="entry name" value="SMALL RIBOSOMAL SUBUNIT PROTEIN US17M"/>
    <property type="match status" value="1"/>
</dbReference>
<dbReference type="Pfam" id="PF00366">
    <property type="entry name" value="Ribosomal_S17"/>
    <property type="match status" value="1"/>
</dbReference>
<dbReference type="PRINTS" id="PR00973">
    <property type="entry name" value="RIBOSOMALS17"/>
</dbReference>
<dbReference type="SUPFAM" id="SSF50249">
    <property type="entry name" value="Nucleic acid-binding proteins"/>
    <property type="match status" value="1"/>
</dbReference>
<name>RS17_FRATH</name>
<gene>
    <name evidence="1" type="primary">rpsQ</name>
    <name type="ordered locus">FTL_0245</name>
</gene>
<proteinExistence type="inferred from homology"/>
<accession>Q2A5G1</accession>